<protein>
    <recommendedName>
        <fullName evidence="1">Uroporphyrinogen decarboxylase</fullName>
        <shortName evidence="1">UPD</shortName>
        <shortName evidence="1">URO-D</shortName>
        <ecNumber evidence="1">4.1.1.37</ecNumber>
    </recommendedName>
</protein>
<proteinExistence type="inferred from homology"/>
<evidence type="ECO:0000255" key="1">
    <source>
        <dbReference type="HAMAP-Rule" id="MF_00218"/>
    </source>
</evidence>
<reference key="1">
    <citation type="journal article" date="2005" name="Nucleic Acids Res.">
        <title>Genome dynamics and diversity of Shigella species, the etiologic agents of bacillary dysentery.</title>
        <authorList>
            <person name="Yang F."/>
            <person name="Yang J."/>
            <person name="Zhang X."/>
            <person name="Chen L."/>
            <person name="Jiang Y."/>
            <person name="Yan Y."/>
            <person name="Tang X."/>
            <person name="Wang J."/>
            <person name="Xiong Z."/>
            <person name="Dong J."/>
            <person name="Xue Y."/>
            <person name="Zhu Y."/>
            <person name="Xu X."/>
            <person name="Sun L."/>
            <person name="Chen S."/>
            <person name="Nie H."/>
            <person name="Peng J."/>
            <person name="Xu J."/>
            <person name="Wang Y."/>
            <person name="Yuan Z."/>
            <person name="Wen Y."/>
            <person name="Yao Z."/>
            <person name="Shen Y."/>
            <person name="Qiang B."/>
            <person name="Hou Y."/>
            <person name="Yu J."/>
            <person name="Jin Q."/>
        </authorList>
    </citation>
    <scope>NUCLEOTIDE SEQUENCE [LARGE SCALE GENOMIC DNA]</scope>
    <source>
        <strain>Ss046</strain>
    </source>
</reference>
<keyword id="KW-0963">Cytoplasm</keyword>
<keyword id="KW-0210">Decarboxylase</keyword>
<keyword id="KW-0456">Lyase</keyword>
<keyword id="KW-0627">Porphyrin biosynthesis</keyword>
<keyword id="KW-1185">Reference proteome</keyword>
<gene>
    <name evidence="1" type="primary">hemE</name>
    <name type="ordered locus">SSON_4170</name>
</gene>
<dbReference type="EC" id="4.1.1.37" evidence="1"/>
<dbReference type="EMBL" id="CP000038">
    <property type="protein sequence ID" value="AAZ90675.1"/>
    <property type="molecule type" value="Genomic_DNA"/>
</dbReference>
<dbReference type="RefSeq" id="WP_000137657.1">
    <property type="nucleotide sequence ID" value="NC_007384.1"/>
</dbReference>
<dbReference type="SMR" id="Q3YUY7"/>
<dbReference type="GeneID" id="93777897"/>
<dbReference type="KEGG" id="ssn:SSON_4170"/>
<dbReference type="HOGENOM" id="CLU_040933_0_0_6"/>
<dbReference type="UniPathway" id="UPA00251">
    <property type="reaction ID" value="UER00321"/>
</dbReference>
<dbReference type="Proteomes" id="UP000002529">
    <property type="component" value="Chromosome"/>
</dbReference>
<dbReference type="GO" id="GO:0005829">
    <property type="term" value="C:cytosol"/>
    <property type="evidence" value="ECO:0007669"/>
    <property type="project" value="TreeGrafter"/>
</dbReference>
<dbReference type="GO" id="GO:0004853">
    <property type="term" value="F:uroporphyrinogen decarboxylase activity"/>
    <property type="evidence" value="ECO:0007669"/>
    <property type="project" value="UniProtKB-UniRule"/>
</dbReference>
<dbReference type="GO" id="GO:0019353">
    <property type="term" value="P:protoporphyrinogen IX biosynthetic process from glutamate"/>
    <property type="evidence" value="ECO:0007669"/>
    <property type="project" value="TreeGrafter"/>
</dbReference>
<dbReference type="CDD" id="cd00717">
    <property type="entry name" value="URO-D"/>
    <property type="match status" value="1"/>
</dbReference>
<dbReference type="FunFam" id="3.20.20.210:FF:000001">
    <property type="entry name" value="Uroporphyrinogen decarboxylase"/>
    <property type="match status" value="1"/>
</dbReference>
<dbReference type="Gene3D" id="3.20.20.210">
    <property type="match status" value="1"/>
</dbReference>
<dbReference type="HAMAP" id="MF_00218">
    <property type="entry name" value="URO_D"/>
    <property type="match status" value="1"/>
</dbReference>
<dbReference type="InterPro" id="IPR038071">
    <property type="entry name" value="UROD/MetE-like_sf"/>
</dbReference>
<dbReference type="InterPro" id="IPR006361">
    <property type="entry name" value="Uroporphyrinogen_deCO2ase_HemE"/>
</dbReference>
<dbReference type="InterPro" id="IPR000257">
    <property type="entry name" value="Uroporphyrinogen_deCOase"/>
</dbReference>
<dbReference type="NCBIfam" id="TIGR01464">
    <property type="entry name" value="hemE"/>
    <property type="match status" value="1"/>
</dbReference>
<dbReference type="PANTHER" id="PTHR21091">
    <property type="entry name" value="METHYLTETRAHYDROFOLATE:HOMOCYSTEINE METHYLTRANSFERASE RELATED"/>
    <property type="match status" value="1"/>
</dbReference>
<dbReference type="PANTHER" id="PTHR21091:SF169">
    <property type="entry name" value="UROPORPHYRINOGEN DECARBOXYLASE"/>
    <property type="match status" value="1"/>
</dbReference>
<dbReference type="Pfam" id="PF01208">
    <property type="entry name" value="URO-D"/>
    <property type="match status" value="1"/>
</dbReference>
<dbReference type="SUPFAM" id="SSF51726">
    <property type="entry name" value="UROD/MetE-like"/>
    <property type="match status" value="1"/>
</dbReference>
<dbReference type="PROSITE" id="PS00906">
    <property type="entry name" value="UROD_1"/>
    <property type="match status" value="1"/>
</dbReference>
<dbReference type="PROSITE" id="PS00907">
    <property type="entry name" value="UROD_2"/>
    <property type="match status" value="1"/>
</dbReference>
<name>DCUP_SHISS</name>
<accession>Q3YUY7</accession>
<comment type="function">
    <text evidence="1">Catalyzes the decarboxylation of four acetate groups of uroporphyrinogen-III to yield coproporphyrinogen-III.</text>
</comment>
<comment type="catalytic activity">
    <reaction evidence="1">
        <text>uroporphyrinogen III + 4 H(+) = coproporphyrinogen III + 4 CO2</text>
        <dbReference type="Rhea" id="RHEA:19865"/>
        <dbReference type="ChEBI" id="CHEBI:15378"/>
        <dbReference type="ChEBI" id="CHEBI:16526"/>
        <dbReference type="ChEBI" id="CHEBI:57308"/>
        <dbReference type="ChEBI" id="CHEBI:57309"/>
        <dbReference type="EC" id="4.1.1.37"/>
    </reaction>
</comment>
<comment type="pathway">
    <text evidence="1">Porphyrin-containing compound metabolism; protoporphyrin-IX biosynthesis; coproporphyrinogen-III from 5-aminolevulinate: step 4/4.</text>
</comment>
<comment type="subunit">
    <text evidence="1">Homodimer.</text>
</comment>
<comment type="subcellular location">
    <subcellularLocation>
        <location evidence="1">Cytoplasm</location>
    </subcellularLocation>
</comment>
<comment type="similarity">
    <text evidence="1">Belongs to the uroporphyrinogen decarboxylase family.</text>
</comment>
<organism>
    <name type="scientific">Shigella sonnei (strain Ss046)</name>
    <dbReference type="NCBI Taxonomy" id="300269"/>
    <lineage>
        <taxon>Bacteria</taxon>
        <taxon>Pseudomonadati</taxon>
        <taxon>Pseudomonadota</taxon>
        <taxon>Gammaproteobacteria</taxon>
        <taxon>Enterobacterales</taxon>
        <taxon>Enterobacteriaceae</taxon>
        <taxon>Shigella</taxon>
    </lineage>
</organism>
<sequence>MTELKNDRYLRALLRQPVDVTPVWMMRQAGRYLPEYKATRAQAGDFMSLCKNAELACEVTLQPLRRYPLDAAILFSDILTVPDAMGLGLYFEAGEGPRFTSPVTCKADVDKLPIPDPEDELGYVMNAVRTIRRELKGEVPLIGFSGSPWTLATYMVEGGSSKAFTVIKKMMYADPQALHALLDKLAKSVTLYLNAQIKAGAQAVMIFDTWGGVLTGRDYQQFSLYYMHKIVDGLLRENDGRRVPVTLFTKGGGQWLEAMAETGCDALGLDWTTDIADARRRVGNKVALQGNMDPSMLYAPPARIEEEVATILAGFGHGEGHVFNLGHGIHQDVPPEHAGVFVEAVHRLSEQYHR</sequence>
<feature type="chain" id="PRO_1000023980" description="Uroporphyrinogen decarboxylase">
    <location>
        <begin position="1"/>
        <end position="354"/>
    </location>
</feature>
<feature type="binding site" evidence="1">
    <location>
        <begin position="27"/>
        <end position="31"/>
    </location>
    <ligand>
        <name>substrate</name>
    </ligand>
</feature>
<feature type="binding site" evidence="1">
    <location>
        <position position="77"/>
    </location>
    <ligand>
        <name>substrate</name>
    </ligand>
</feature>
<feature type="binding site" evidence="1">
    <location>
        <position position="154"/>
    </location>
    <ligand>
        <name>substrate</name>
    </ligand>
</feature>
<feature type="binding site" evidence="1">
    <location>
        <position position="209"/>
    </location>
    <ligand>
        <name>substrate</name>
    </ligand>
</feature>
<feature type="binding site" evidence="1">
    <location>
        <position position="327"/>
    </location>
    <ligand>
        <name>substrate</name>
    </ligand>
</feature>
<feature type="site" description="Transition state stabilizer" evidence="1">
    <location>
        <position position="77"/>
    </location>
</feature>